<comment type="catalytic activity">
    <reaction evidence="1">
        <text>a quinone + NADH + H(+) = a quinol + NAD(+)</text>
        <dbReference type="Rhea" id="RHEA:46160"/>
        <dbReference type="ChEBI" id="CHEBI:15378"/>
        <dbReference type="ChEBI" id="CHEBI:24646"/>
        <dbReference type="ChEBI" id="CHEBI:57540"/>
        <dbReference type="ChEBI" id="CHEBI:57945"/>
        <dbReference type="ChEBI" id="CHEBI:132124"/>
        <dbReference type="EC" id="1.6.5.2"/>
    </reaction>
</comment>
<comment type="catalytic activity">
    <reaction evidence="1">
        <text>a quinone + NADPH + H(+) = a quinol + NADP(+)</text>
        <dbReference type="Rhea" id="RHEA:46164"/>
        <dbReference type="ChEBI" id="CHEBI:15378"/>
        <dbReference type="ChEBI" id="CHEBI:24646"/>
        <dbReference type="ChEBI" id="CHEBI:57783"/>
        <dbReference type="ChEBI" id="CHEBI:58349"/>
        <dbReference type="ChEBI" id="CHEBI:132124"/>
        <dbReference type="EC" id="1.6.5.2"/>
    </reaction>
</comment>
<comment type="cofactor">
    <cofactor evidence="1">
        <name>FMN</name>
        <dbReference type="ChEBI" id="CHEBI:58210"/>
    </cofactor>
    <text evidence="1">Binds 1 FMN per monomer.</text>
</comment>
<comment type="similarity">
    <text evidence="1">Belongs to the WrbA family.</text>
</comment>
<reference key="1">
    <citation type="submission" date="2008-02" db="EMBL/GenBank/DDBJ databases">
        <title>Complete sequence of chromosome of Methylobacterium sp. 4-46.</title>
        <authorList>
            <consortium name="US DOE Joint Genome Institute"/>
            <person name="Copeland A."/>
            <person name="Lucas S."/>
            <person name="Lapidus A."/>
            <person name="Glavina del Rio T."/>
            <person name="Dalin E."/>
            <person name="Tice H."/>
            <person name="Bruce D."/>
            <person name="Goodwin L."/>
            <person name="Pitluck S."/>
            <person name="Chertkov O."/>
            <person name="Brettin T."/>
            <person name="Detter J.C."/>
            <person name="Han C."/>
            <person name="Kuske C.R."/>
            <person name="Schmutz J."/>
            <person name="Larimer F."/>
            <person name="Land M."/>
            <person name="Hauser L."/>
            <person name="Kyrpides N."/>
            <person name="Ivanova N."/>
            <person name="Marx C.J."/>
            <person name="Richardson P."/>
        </authorList>
    </citation>
    <scope>NUCLEOTIDE SEQUENCE [LARGE SCALE GENOMIC DNA]</scope>
    <source>
        <strain>4-46</strain>
    </source>
</reference>
<feature type="chain" id="PRO_1000200636" description="NAD(P)H dehydrogenase (quinone)">
    <location>
        <begin position="1"/>
        <end position="199"/>
    </location>
</feature>
<feature type="domain" description="Flavodoxin-like" evidence="1">
    <location>
        <begin position="4"/>
        <end position="190"/>
    </location>
</feature>
<feature type="binding site" evidence="1">
    <location>
        <begin position="10"/>
        <end position="15"/>
    </location>
    <ligand>
        <name>FMN</name>
        <dbReference type="ChEBI" id="CHEBI:58210"/>
    </ligand>
</feature>
<feature type="binding site" evidence="1">
    <location>
        <position position="12"/>
    </location>
    <ligand>
        <name>NAD(+)</name>
        <dbReference type="ChEBI" id="CHEBI:57540"/>
    </ligand>
</feature>
<feature type="binding site" evidence="1">
    <location>
        <begin position="78"/>
        <end position="80"/>
    </location>
    <ligand>
        <name>FMN</name>
        <dbReference type="ChEBI" id="CHEBI:58210"/>
    </ligand>
</feature>
<feature type="binding site" evidence="1">
    <location>
        <position position="98"/>
    </location>
    <ligand>
        <name>substrate</name>
    </ligand>
</feature>
<feature type="binding site" evidence="1">
    <location>
        <begin position="113"/>
        <end position="119"/>
    </location>
    <ligand>
        <name>FMN</name>
        <dbReference type="ChEBI" id="CHEBI:58210"/>
    </ligand>
</feature>
<feature type="binding site" evidence="1">
    <location>
        <position position="134"/>
    </location>
    <ligand>
        <name>FMN</name>
        <dbReference type="ChEBI" id="CHEBI:58210"/>
    </ligand>
</feature>
<accession>B0UFU2</accession>
<sequence>MAKVLVLYYSTYGHIEQMAHAVAEGAREAGAEVDVKRVPELVPEDVARKSHFKLDQSAPLARVDELPNYDAIIFGTPTRYGNMASQMKNFLDQTGGLWMKGALVGKVGSVFTSSASQHGGQESTILSFHTVLLHHGMVLVGLPYAFQGQLGVSQVMGNSPYGASTIADGDGSRQPSPIELDGARYQGRHVAGIAAKLAG</sequence>
<proteinExistence type="inferred from homology"/>
<protein>
    <recommendedName>
        <fullName evidence="1">NAD(P)H dehydrogenase (quinone)</fullName>
        <ecNumber evidence="1">1.6.5.2</ecNumber>
    </recommendedName>
    <alternativeName>
        <fullName>Flavoprotein WrbA</fullName>
    </alternativeName>
    <alternativeName>
        <fullName evidence="1">NAD(P)H:quinone oxidoreductase</fullName>
        <shortName evidence="1">NQO</shortName>
    </alternativeName>
</protein>
<gene>
    <name type="ordered locus">M446_2368</name>
</gene>
<dbReference type="EC" id="1.6.5.2" evidence="1"/>
<dbReference type="EMBL" id="CP000943">
    <property type="protein sequence ID" value="ACA16826.1"/>
    <property type="molecule type" value="Genomic_DNA"/>
</dbReference>
<dbReference type="SMR" id="B0UFU2"/>
<dbReference type="STRING" id="426117.M446_2368"/>
<dbReference type="CAZy" id="AA6">
    <property type="family name" value="Auxiliary Activities 6"/>
</dbReference>
<dbReference type="KEGG" id="met:M446_2368"/>
<dbReference type="eggNOG" id="COG0655">
    <property type="taxonomic scope" value="Bacteria"/>
</dbReference>
<dbReference type="HOGENOM" id="CLU_051402_0_2_5"/>
<dbReference type="GO" id="GO:0016020">
    <property type="term" value="C:membrane"/>
    <property type="evidence" value="ECO:0007669"/>
    <property type="project" value="TreeGrafter"/>
</dbReference>
<dbReference type="GO" id="GO:0050660">
    <property type="term" value="F:flavin adenine dinucleotide binding"/>
    <property type="evidence" value="ECO:0007669"/>
    <property type="project" value="UniProtKB-UniRule"/>
</dbReference>
<dbReference type="GO" id="GO:0010181">
    <property type="term" value="F:FMN binding"/>
    <property type="evidence" value="ECO:0007669"/>
    <property type="project" value="InterPro"/>
</dbReference>
<dbReference type="GO" id="GO:0051287">
    <property type="term" value="F:NAD binding"/>
    <property type="evidence" value="ECO:0007669"/>
    <property type="project" value="UniProtKB-UniRule"/>
</dbReference>
<dbReference type="GO" id="GO:0050136">
    <property type="term" value="F:NADH:ubiquinone reductase (non-electrogenic) activity"/>
    <property type="evidence" value="ECO:0007669"/>
    <property type="project" value="RHEA"/>
</dbReference>
<dbReference type="GO" id="GO:0050661">
    <property type="term" value="F:NADP binding"/>
    <property type="evidence" value="ECO:0007669"/>
    <property type="project" value="UniProtKB-UniRule"/>
</dbReference>
<dbReference type="GO" id="GO:0008753">
    <property type="term" value="F:NADPH dehydrogenase (quinone) activity"/>
    <property type="evidence" value="ECO:0007669"/>
    <property type="project" value="RHEA"/>
</dbReference>
<dbReference type="FunFam" id="3.40.50.360:FF:000001">
    <property type="entry name" value="NAD(P)H dehydrogenase (Quinone) FQR1-like"/>
    <property type="match status" value="1"/>
</dbReference>
<dbReference type="Gene3D" id="3.40.50.360">
    <property type="match status" value="1"/>
</dbReference>
<dbReference type="HAMAP" id="MF_01017">
    <property type="entry name" value="NQOR"/>
    <property type="match status" value="1"/>
</dbReference>
<dbReference type="InterPro" id="IPR008254">
    <property type="entry name" value="Flavodoxin/NO_synth"/>
</dbReference>
<dbReference type="InterPro" id="IPR029039">
    <property type="entry name" value="Flavoprotein-like_sf"/>
</dbReference>
<dbReference type="InterPro" id="IPR010089">
    <property type="entry name" value="Flavoprotein_WrbA-like"/>
</dbReference>
<dbReference type="InterPro" id="IPR005025">
    <property type="entry name" value="FMN_Rdtase-like_dom"/>
</dbReference>
<dbReference type="InterPro" id="IPR037513">
    <property type="entry name" value="NQO"/>
</dbReference>
<dbReference type="NCBIfam" id="TIGR01755">
    <property type="entry name" value="flav_wrbA"/>
    <property type="match status" value="1"/>
</dbReference>
<dbReference type="NCBIfam" id="NF002999">
    <property type="entry name" value="PRK03767.1"/>
    <property type="match status" value="1"/>
</dbReference>
<dbReference type="PANTHER" id="PTHR30546">
    <property type="entry name" value="FLAVODOXIN-RELATED PROTEIN WRBA-RELATED"/>
    <property type="match status" value="1"/>
</dbReference>
<dbReference type="PANTHER" id="PTHR30546:SF23">
    <property type="entry name" value="FLAVOPROTEIN-LIKE PROTEIN YCP4-RELATED"/>
    <property type="match status" value="1"/>
</dbReference>
<dbReference type="Pfam" id="PF03358">
    <property type="entry name" value="FMN_red"/>
    <property type="match status" value="1"/>
</dbReference>
<dbReference type="SUPFAM" id="SSF52218">
    <property type="entry name" value="Flavoproteins"/>
    <property type="match status" value="1"/>
</dbReference>
<dbReference type="PROSITE" id="PS50902">
    <property type="entry name" value="FLAVODOXIN_LIKE"/>
    <property type="match status" value="1"/>
</dbReference>
<keyword id="KW-0285">Flavoprotein</keyword>
<keyword id="KW-0288">FMN</keyword>
<keyword id="KW-0520">NAD</keyword>
<keyword id="KW-0521">NADP</keyword>
<keyword id="KW-0547">Nucleotide-binding</keyword>
<keyword id="KW-0560">Oxidoreductase</keyword>
<name>NQOR_METS4</name>
<organism>
    <name type="scientific">Methylobacterium sp. (strain 4-46)</name>
    <dbReference type="NCBI Taxonomy" id="426117"/>
    <lineage>
        <taxon>Bacteria</taxon>
        <taxon>Pseudomonadati</taxon>
        <taxon>Pseudomonadota</taxon>
        <taxon>Alphaproteobacteria</taxon>
        <taxon>Hyphomicrobiales</taxon>
        <taxon>Methylobacteriaceae</taxon>
        <taxon>Methylobacterium</taxon>
    </lineage>
</organism>
<evidence type="ECO:0000255" key="1">
    <source>
        <dbReference type="HAMAP-Rule" id="MF_01017"/>
    </source>
</evidence>